<gene>
    <name type="primary">nuoF</name>
    <name type="ordered locus">bbp_147</name>
</gene>
<protein>
    <recommendedName>
        <fullName>NADH-quinone oxidoreductase subunit F</fullName>
        <ecNumber>7.1.1.-</ecNumber>
    </recommendedName>
    <alternativeName>
        <fullName>NADH dehydrogenase I subunit F</fullName>
    </alternativeName>
    <alternativeName>
        <fullName>NDH-1 subunit F</fullName>
    </alternativeName>
</protein>
<proteinExistence type="inferred from homology"/>
<feature type="chain" id="PRO_0000118573" description="NADH-quinone oxidoreductase subunit F">
    <location>
        <begin position="1"/>
        <end position="444"/>
    </location>
</feature>
<feature type="binding site" evidence="1">
    <location>
        <begin position="62"/>
        <end position="71"/>
    </location>
    <ligand>
        <name>NAD(+)</name>
        <dbReference type="ChEBI" id="CHEBI:57540"/>
    </ligand>
</feature>
<feature type="binding site" evidence="1">
    <location>
        <begin position="177"/>
        <end position="224"/>
    </location>
    <ligand>
        <name>FMN</name>
        <dbReference type="ChEBI" id="CHEBI:58210"/>
    </ligand>
</feature>
<feature type="binding site" evidence="2">
    <location>
        <position position="354"/>
    </location>
    <ligand>
        <name>[4Fe-4S] cluster</name>
        <dbReference type="ChEBI" id="CHEBI:49883"/>
    </ligand>
</feature>
<feature type="binding site" evidence="2">
    <location>
        <position position="357"/>
    </location>
    <ligand>
        <name>[4Fe-4S] cluster</name>
        <dbReference type="ChEBI" id="CHEBI:49883"/>
    </ligand>
</feature>
<feature type="binding site" evidence="2">
    <location>
        <position position="360"/>
    </location>
    <ligand>
        <name>[4Fe-4S] cluster</name>
        <dbReference type="ChEBI" id="CHEBI:49883"/>
    </ligand>
</feature>
<feature type="binding site" evidence="2">
    <location>
        <position position="401"/>
    </location>
    <ligand>
        <name>[4Fe-4S] cluster</name>
        <dbReference type="ChEBI" id="CHEBI:49883"/>
    </ligand>
</feature>
<name>NUOF_BUCBP</name>
<accession>Q89AU2</accession>
<reference key="1">
    <citation type="journal article" date="2003" name="Proc. Natl. Acad. Sci. U.S.A.">
        <title>Reductive genome evolution in Buchnera aphidicola.</title>
        <authorList>
            <person name="van Ham R.C.H.J."/>
            <person name="Kamerbeek J."/>
            <person name="Palacios C."/>
            <person name="Rausell C."/>
            <person name="Abascal F."/>
            <person name="Bastolla U."/>
            <person name="Fernandez J.M."/>
            <person name="Jimenez L."/>
            <person name="Postigo M."/>
            <person name="Silva F.J."/>
            <person name="Tamames J."/>
            <person name="Viguera E."/>
            <person name="Latorre A."/>
            <person name="Valencia A."/>
            <person name="Moran F."/>
            <person name="Moya A."/>
        </authorList>
    </citation>
    <scope>NUCLEOTIDE SEQUENCE [LARGE SCALE GENOMIC DNA]</scope>
    <source>
        <strain>Bp</strain>
    </source>
</reference>
<sequence>MKKLLSRTSETHPLTWRLNAQQDTVWIKEYKRKNGYRAFEKVVNHMTSEDVIDLIKQSGLKGRGGAGFLTGLKWSLMPPLNDEYGYTRYLLCNADEMEPGTYKDRFLMEKVPHQLLEGILISAFALSVTKSYIFLRGEYVNTERILKQSIIEATNYGYLGKNVCGSNLTFEIFIHTGAGRYICGEETALINSLEGRRANPRFKPPFPAYVGLWGKPTCVNNVETLSNVPAIFLNGVKWYKGLSKSLDTGTKMMGFSGSVKFPGIWELPFGITAREIFERYAGGMKNNKKLKVWQPGGASTSFLIDKHLDVPMDFVNIKKVGSRLGTALAMAVDDSVSIVSLVRNIEEFFSRESCGFCTPCRDGLPWIVKILKVLEQKIGVPEDIEILEQLCEQLGPGRTFCAHAPGAIEPLKSALKYFRLEFELCVNSNSTIKCKYIHSSISEY</sequence>
<organism>
    <name type="scientific">Buchnera aphidicola subsp. Baizongia pistaciae (strain Bp)</name>
    <dbReference type="NCBI Taxonomy" id="224915"/>
    <lineage>
        <taxon>Bacteria</taxon>
        <taxon>Pseudomonadati</taxon>
        <taxon>Pseudomonadota</taxon>
        <taxon>Gammaproteobacteria</taxon>
        <taxon>Enterobacterales</taxon>
        <taxon>Erwiniaceae</taxon>
        <taxon>Buchnera</taxon>
    </lineage>
</organism>
<comment type="function">
    <text evidence="1">NDH-1 shuttles electrons from NADH, via FMN and iron-sulfur (Fe-S) centers, to quinones in the respiratory chain. Couples the redox reaction to proton translocation (for every two electrons transferred, four hydrogen ions are translocated across the cytoplasmic membrane), and thus conserves the redox energy in a proton gradient (By similarity).</text>
</comment>
<comment type="catalytic activity">
    <reaction>
        <text>a quinone + NADH + 5 H(+)(in) = a quinol + NAD(+) + 4 H(+)(out)</text>
        <dbReference type="Rhea" id="RHEA:57888"/>
        <dbReference type="ChEBI" id="CHEBI:15378"/>
        <dbReference type="ChEBI" id="CHEBI:24646"/>
        <dbReference type="ChEBI" id="CHEBI:57540"/>
        <dbReference type="ChEBI" id="CHEBI:57945"/>
        <dbReference type="ChEBI" id="CHEBI:132124"/>
    </reaction>
</comment>
<comment type="cofactor">
    <cofactor evidence="3">
        <name>[4Fe-4S] cluster</name>
        <dbReference type="ChEBI" id="CHEBI:49883"/>
    </cofactor>
    <text evidence="3">Binds 1 [4Fe-4S] cluster.</text>
</comment>
<comment type="cofactor">
    <cofactor evidence="3">
        <name>FMN</name>
        <dbReference type="ChEBI" id="CHEBI:58210"/>
    </cofactor>
</comment>
<comment type="subunit">
    <text evidence="1">Composed of 13 different subunits. Subunits NuoCD, E, F, and G constitute the peripheral sector of the complex (By similarity).</text>
</comment>
<comment type="similarity">
    <text evidence="3">Belongs to the complex I 51 kDa subunit family.</text>
</comment>
<keyword id="KW-0004">4Fe-4S</keyword>
<keyword id="KW-0285">Flavoprotein</keyword>
<keyword id="KW-0288">FMN</keyword>
<keyword id="KW-0408">Iron</keyword>
<keyword id="KW-0411">Iron-sulfur</keyword>
<keyword id="KW-0479">Metal-binding</keyword>
<keyword id="KW-0520">NAD</keyword>
<keyword id="KW-0874">Quinone</keyword>
<keyword id="KW-1185">Reference proteome</keyword>
<keyword id="KW-1278">Translocase</keyword>
<evidence type="ECO:0000250" key="1"/>
<evidence type="ECO:0000255" key="2"/>
<evidence type="ECO:0000305" key="3"/>
<dbReference type="EC" id="7.1.1.-"/>
<dbReference type="EMBL" id="AE016826">
    <property type="protein sequence ID" value="AAO26881.1"/>
    <property type="molecule type" value="Genomic_DNA"/>
</dbReference>
<dbReference type="RefSeq" id="WP_011091282.1">
    <property type="nucleotide sequence ID" value="NC_004545.1"/>
</dbReference>
<dbReference type="SMR" id="Q89AU2"/>
<dbReference type="STRING" id="224915.bbp_147"/>
<dbReference type="KEGG" id="bab:bbp_147"/>
<dbReference type="eggNOG" id="COG1894">
    <property type="taxonomic scope" value="Bacteria"/>
</dbReference>
<dbReference type="HOGENOM" id="CLU_014881_0_1_6"/>
<dbReference type="OrthoDB" id="9805533at2"/>
<dbReference type="Proteomes" id="UP000000601">
    <property type="component" value="Chromosome"/>
</dbReference>
<dbReference type="GO" id="GO:0051539">
    <property type="term" value="F:4 iron, 4 sulfur cluster binding"/>
    <property type="evidence" value="ECO:0007669"/>
    <property type="project" value="UniProtKB-KW"/>
</dbReference>
<dbReference type="GO" id="GO:0010181">
    <property type="term" value="F:FMN binding"/>
    <property type="evidence" value="ECO:0007669"/>
    <property type="project" value="InterPro"/>
</dbReference>
<dbReference type="GO" id="GO:0046872">
    <property type="term" value="F:metal ion binding"/>
    <property type="evidence" value="ECO:0007669"/>
    <property type="project" value="UniProtKB-KW"/>
</dbReference>
<dbReference type="GO" id="GO:0051287">
    <property type="term" value="F:NAD binding"/>
    <property type="evidence" value="ECO:0007669"/>
    <property type="project" value="InterPro"/>
</dbReference>
<dbReference type="GO" id="GO:0008137">
    <property type="term" value="F:NADH dehydrogenase (ubiquinone) activity"/>
    <property type="evidence" value="ECO:0007669"/>
    <property type="project" value="InterPro"/>
</dbReference>
<dbReference type="GO" id="GO:0048038">
    <property type="term" value="F:quinone binding"/>
    <property type="evidence" value="ECO:0007669"/>
    <property type="project" value="UniProtKB-KW"/>
</dbReference>
<dbReference type="FunFam" id="3.40.50.11540:FF:000001">
    <property type="entry name" value="NADH dehydrogenase [ubiquinone] flavoprotein 1, mitochondrial"/>
    <property type="match status" value="1"/>
</dbReference>
<dbReference type="FunFam" id="1.20.1440.230:FF:000002">
    <property type="entry name" value="NADH-quinone oxidoreductase subunit F"/>
    <property type="match status" value="1"/>
</dbReference>
<dbReference type="FunFam" id="3.10.20.600:FF:000002">
    <property type="entry name" value="NADH-quinone oxidoreductase subunit F"/>
    <property type="match status" value="1"/>
</dbReference>
<dbReference type="Gene3D" id="3.10.20.600">
    <property type="match status" value="1"/>
</dbReference>
<dbReference type="Gene3D" id="6.10.250.1450">
    <property type="match status" value="1"/>
</dbReference>
<dbReference type="Gene3D" id="3.40.50.11540">
    <property type="entry name" value="NADH-ubiquinone oxidoreductase 51kDa subunit"/>
    <property type="match status" value="1"/>
</dbReference>
<dbReference type="Gene3D" id="1.20.1440.230">
    <property type="entry name" value="NADH-ubiquinone oxidoreductase 51kDa subunit, iron-sulphur binding domain"/>
    <property type="match status" value="1"/>
</dbReference>
<dbReference type="InterPro" id="IPR001949">
    <property type="entry name" value="NADH-UbQ_OxRdtase_51kDa_CS"/>
</dbReference>
<dbReference type="InterPro" id="IPR011537">
    <property type="entry name" value="NADH-UbQ_OxRdtase_suF"/>
</dbReference>
<dbReference type="InterPro" id="IPR011538">
    <property type="entry name" value="Nuo51_FMN-bd"/>
</dbReference>
<dbReference type="InterPro" id="IPR037225">
    <property type="entry name" value="Nuo51_FMN-bd_sf"/>
</dbReference>
<dbReference type="InterPro" id="IPR019575">
    <property type="entry name" value="Nuop51_4Fe4S-bd"/>
</dbReference>
<dbReference type="InterPro" id="IPR037207">
    <property type="entry name" value="Nuop51_4Fe4S-bd_sf"/>
</dbReference>
<dbReference type="NCBIfam" id="TIGR01959">
    <property type="entry name" value="nuoF_fam"/>
    <property type="match status" value="1"/>
</dbReference>
<dbReference type="NCBIfam" id="NF010120">
    <property type="entry name" value="PRK13596.1"/>
    <property type="match status" value="1"/>
</dbReference>
<dbReference type="PANTHER" id="PTHR43578">
    <property type="entry name" value="NADH-QUINONE OXIDOREDUCTASE SUBUNIT F"/>
    <property type="match status" value="1"/>
</dbReference>
<dbReference type="PANTHER" id="PTHR43578:SF3">
    <property type="entry name" value="NADH-QUINONE OXIDOREDUCTASE SUBUNIT F"/>
    <property type="match status" value="1"/>
</dbReference>
<dbReference type="Pfam" id="PF01512">
    <property type="entry name" value="Complex1_51K"/>
    <property type="match status" value="1"/>
</dbReference>
<dbReference type="Pfam" id="PF10589">
    <property type="entry name" value="NADH_4Fe-4S"/>
    <property type="match status" value="1"/>
</dbReference>
<dbReference type="SMART" id="SM00928">
    <property type="entry name" value="NADH_4Fe-4S"/>
    <property type="match status" value="1"/>
</dbReference>
<dbReference type="SUPFAM" id="SSF142019">
    <property type="entry name" value="Nqo1 FMN-binding domain-like"/>
    <property type="match status" value="1"/>
</dbReference>
<dbReference type="SUPFAM" id="SSF142984">
    <property type="entry name" value="Nqo1 middle domain-like"/>
    <property type="match status" value="1"/>
</dbReference>
<dbReference type="SUPFAM" id="SSF140490">
    <property type="entry name" value="Nqo1C-terminal domain-like"/>
    <property type="match status" value="1"/>
</dbReference>
<dbReference type="PROSITE" id="PS00644">
    <property type="entry name" value="COMPLEX1_51K_1"/>
    <property type="match status" value="1"/>
</dbReference>
<dbReference type="PROSITE" id="PS00645">
    <property type="entry name" value="COMPLEX1_51K_2"/>
    <property type="match status" value="1"/>
</dbReference>